<evidence type="ECO:0000269" key="1">
    <source>
    </source>
</evidence>
<evidence type="ECO:0000303" key="2">
    <source>
    </source>
</evidence>
<evidence type="ECO:0000305" key="3"/>
<reference evidence="3" key="1">
    <citation type="journal article" date="1997" name="J. Biol. Chem.">
        <title>Differential extraction and protein sequencing reveals major differences in patterns of primary cell wall proteins from plants.</title>
        <authorList>
            <person name="Robertson D."/>
            <person name="Mitchell G.P."/>
            <person name="Gilroy J.S."/>
            <person name="Gerrish C."/>
            <person name="Bolwell G.P."/>
            <person name="Slabas A.R."/>
        </authorList>
    </citation>
    <scope>PROTEIN SEQUENCE</scope>
    <scope>SUBCELLULAR LOCATION</scope>
</reference>
<feature type="chain" id="PRO_0000079676" description="33 kDa cell wall protein">
    <location>
        <begin position="1"/>
        <end position="11" status="greater than"/>
    </location>
</feature>
<feature type="non-terminal residue" evidence="2">
    <location>
        <position position="11"/>
    </location>
</feature>
<dbReference type="PaxDb" id="4097-P80792"/>
<dbReference type="Proteomes" id="UP000084051">
    <property type="component" value="Unplaced"/>
</dbReference>
<dbReference type="GO" id="GO:0005576">
    <property type="term" value="C:extracellular region"/>
    <property type="evidence" value="ECO:0007669"/>
    <property type="project" value="UniProtKB-KW"/>
</dbReference>
<proteinExistence type="evidence at protein level"/>
<name>CWP15_TOBAC</name>
<organism>
    <name type="scientific">Nicotiana tabacum</name>
    <name type="common">Common tobacco</name>
    <dbReference type="NCBI Taxonomy" id="4097"/>
    <lineage>
        <taxon>Eukaryota</taxon>
        <taxon>Viridiplantae</taxon>
        <taxon>Streptophyta</taxon>
        <taxon>Embryophyta</taxon>
        <taxon>Tracheophyta</taxon>
        <taxon>Spermatophyta</taxon>
        <taxon>Magnoliopsida</taxon>
        <taxon>eudicotyledons</taxon>
        <taxon>Gunneridae</taxon>
        <taxon>Pentapetalae</taxon>
        <taxon>asterids</taxon>
        <taxon>lamiids</taxon>
        <taxon>Solanales</taxon>
        <taxon>Solanaceae</taxon>
        <taxon>Nicotianoideae</taxon>
        <taxon>Nicotianeae</taxon>
        <taxon>Nicotiana</taxon>
    </lineage>
</organism>
<comment type="subcellular location">
    <subcellularLocation>
        <location evidence="1">Secreted</location>
        <location evidence="1">Cell wall</location>
    </subcellularLocation>
</comment>
<sequence>EQCQDMAGGAR</sequence>
<keyword id="KW-0134">Cell wall</keyword>
<keyword id="KW-0903">Direct protein sequencing</keyword>
<keyword id="KW-1185">Reference proteome</keyword>
<keyword id="KW-0964">Secreted</keyword>
<accession>P80792</accession>
<protein>
    <recommendedName>
        <fullName>33 kDa cell wall protein</fullName>
    </recommendedName>
</protein>